<feature type="chain" id="PRO_0000378264" description="Putative cysteine ligase BshC">
    <location>
        <begin position="1"/>
        <end position="537"/>
    </location>
</feature>
<feature type="coiled-coil region" evidence="1">
    <location>
        <begin position="422"/>
        <end position="450"/>
    </location>
</feature>
<keyword id="KW-0175">Coiled coil</keyword>
<keyword id="KW-0436">Ligase</keyword>
<dbReference type="EC" id="6.-.-.-" evidence="1"/>
<dbReference type="EMBL" id="CP000730">
    <property type="protein sequence ID" value="ABX29134.1"/>
    <property type="molecule type" value="Genomic_DNA"/>
</dbReference>
<dbReference type="RefSeq" id="WP_000340475.1">
    <property type="nucleotide sequence ID" value="NC_010079.1"/>
</dbReference>
<dbReference type="SMR" id="A8Z3L8"/>
<dbReference type="KEGG" id="sax:USA300HOU_1117"/>
<dbReference type="HOGENOM" id="CLU_022249_0_0_9"/>
<dbReference type="GO" id="GO:0016874">
    <property type="term" value="F:ligase activity"/>
    <property type="evidence" value="ECO:0007669"/>
    <property type="project" value="UniProtKB-UniRule"/>
</dbReference>
<dbReference type="HAMAP" id="MF_01867">
    <property type="entry name" value="BshC"/>
    <property type="match status" value="1"/>
</dbReference>
<dbReference type="InterPro" id="IPR011199">
    <property type="entry name" value="Bacillithiol_biosynth_BshC"/>
</dbReference>
<dbReference type="InterPro" id="IPR055399">
    <property type="entry name" value="CC_BshC"/>
</dbReference>
<dbReference type="InterPro" id="IPR055398">
    <property type="entry name" value="Rossmann-like_BshC"/>
</dbReference>
<dbReference type="NCBIfam" id="TIGR03998">
    <property type="entry name" value="thiol_BshC"/>
    <property type="match status" value="1"/>
</dbReference>
<dbReference type="Pfam" id="PF24850">
    <property type="entry name" value="CC_BshC"/>
    <property type="match status" value="1"/>
</dbReference>
<dbReference type="Pfam" id="PF10079">
    <property type="entry name" value="Rossmann-like_BshC"/>
    <property type="match status" value="1"/>
</dbReference>
<dbReference type="PIRSF" id="PIRSF012535">
    <property type="entry name" value="UCP012535"/>
    <property type="match status" value="1"/>
</dbReference>
<accession>A8Z3L8</accession>
<name>BSHC_STAAT</name>
<organism>
    <name type="scientific">Staphylococcus aureus (strain USA300 / TCH1516)</name>
    <dbReference type="NCBI Taxonomy" id="451516"/>
    <lineage>
        <taxon>Bacteria</taxon>
        <taxon>Bacillati</taxon>
        <taxon>Bacillota</taxon>
        <taxon>Bacilli</taxon>
        <taxon>Bacillales</taxon>
        <taxon>Staphylococcaceae</taxon>
        <taxon>Staphylococcus</taxon>
    </lineage>
</organism>
<evidence type="ECO:0000255" key="1">
    <source>
        <dbReference type="HAMAP-Rule" id="MF_01867"/>
    </source>
</evidence>
<sequence length="537" mass="62807">MDCKVVSLNEKDQFIPKIKSSDPVITGLFQYDAAQQTSFEKRMSKENNGREAALANVIREYMSDLKLSSEQELNIQHLANGSKVVIGGQQAGLFGGPLYTFHKIFSIITLSKELTDTHKQQVVPVFWIAGEDHDFDEVNHTFVYNENHGSLHKVKYHTMEMPETTVSRYYPDKAELKQTLKTMFIHMKETVHTQGLLEICDRIIDQYDSWTDMFKALLHETFKAYGVLFIDAQFEPLRKMEAPMFKKILKKHQLLDDAFRATQQRTQNQGLNAMIQTDTNVHLFLHDENMRQLVSYDGKHFKLNKTDKTYIKEEIINIAENQPELFSNNVVTRPLMEEWLFNTVAFVGGPSEIKYWAELKDVFELFDVEMPIVMPRLRITYLNDRIEKLLSKYNIPLEKVLVDGVEGERSKFIREQASHQFIEKVEGMIEQQRRLNKDLLDEVAGNQNNINLVNKNNEIHIQQYDYLLKRYLLNIERENDISMKQFREIQETLHPMGGLQERIWNPLQILNDFGTDVFKPSTYPPLSYTFDHIIIKP</sequence>
<protein>
    <recommendedName>
        <fullName evidence="1">Putative cysteine ligase BshC</fullName>
        <ecNumber evidence="1">6.-.-.-</ecNumber>
    </recommendedName>
</protein>
<gene>
    <name evidence="1" type="primary">bshC</name>
    <name type="ordered locus">USA300HOU_1117</name>
</gene>
<reference key="1">
    <citation type="journal article" date="2007" name="BMC Microbiol.">
        <title>Subtle genetic changes enhance virulence of methicillin resistant and sensitive Staphylococcus aureus.</title>
        <authorList>
            <person name="Highlander S.K."/>
            <person name="Hulten K.G."/>
            <person name="Qin X."/>
            <person name="Jiang H."/>
            <person name="Yerrapragada S."/>
            <person name="Mason E.O. Jr."/>
            <person name="Shang Y."/>
            <person name="Williams T.M."/>
            <person name="Fortunov R.M."/>
            <person name="Liu Y."/>
            <person name="Igboeli O."/>
            <person name="Petrosino J."/>
            <person name="Tirumalai M."/>
            <person name="Uzman A."/>
            <person name="Fox G.E."/>
            <person name="Cardenas A.M."/>
            <person name="Muzny D.M."/>
            <person name="Hemphill L."/>
            <person name="Ding Y."/>
            <person name="Dugan S."/>
            <person name="Blyth P.R."/>
            <person name="Buhay C.J."/>
            <person name="Dinh H.H."/>
            <person name="Hawes A.C."/>
            <person name="Holder M."/>
            <person name="Kovar C.L."/>
            <person name="Lee S.L."/>
            <person name="Liu W."/>
            <person name="Nazareth L.V."/>
            <person name="Wang Q."/>
            <person name="Zhou J."/>
            <person name="Kaplan S.L."/>
            <person name="Weinstock G.M."/>
        </authorList>
    </citation>
    <scope>NUCLEOTIDE SEQUENCE [LARGE SCALE GENOMIC DNA]</scope>
    <source>
        <strain>USA300 / TCH1516</strain>
    </source>
</reference>
<comment type="function">
    <text evidence="1">Involved in bacillithiol (BSH) biosynthesis. May catalyze the last step of the pathway, the addition of cysteine to glucosamine malate (GlcN-Mal) to generate BSH.</text>
</comment>
<comment type="similarity">
    <text evidence="1">Belongs to the BshC family.</text>
</comment>
<proteinExistence type="inferred from homology"/>